<dbReference type="EMBL" id="CP000416">
    <property type="protein sequence ID" value="ABJ64758.1"/>
    <property type="molecule type" value="Genomic_DNA"/>
</dbReference>
<dbReference type="RefSeq" id="WP_011668492.1">
    <property type="nucleotide sequence ID" value="NC_008497.1"/>
</dbReference>
<dbReference type="SMR" id="Q03PW4"/>
<dbReference type="STRING" id="387344.LVIS_1683"/>
<dbReference type="GeneID" id="56993544"/>
<dbReference type="KEGG" id="lbr:LVIS_1683"/>
<dbReference type="eggNOG" id="COG0197">
    <property type="taxonomic scope" value="Bacteria"/>
</dbReference>
<dbReference type="HOGENOM" id="CLU_078858_2_1_9"/>
<dbReference type="Proteomes" id="UP000001652">
    <property type="component" value="Chromosome"/>
</dbReference>
<dbReference type="GO" id="GO:0022625">
    <property type="term" value="C:cytosolic large ribosomal subunit"/>
    <property type="evidence" value="ECO:0007669"/>
    <property type="project" value="TreeGrafter"/>
</dbReference>
<dbReference type="GO" id="GO:0019843">
    <property type="term" value="F:rRNA binding"/>
    <property type="evidence" value="ECO:0007669"/>
    <property type="project" value="UniProtKB-UniRule"/>
</dbReference>
<dbReference type="GO" id="GO:0003735">
    <property type="term" value="F:structural constituent of ribosome"/>
    <property type="evidence" value="ECO:0007669"/>
    <property type="project" value="InterPro"/>
</dbReference>
<dbReference type="GO" id="GO:0000049">
    <property type="term" value="F:tRNA binding"/>
    <property type="evidence" value="ECO:0007669"/>
    <property type="project" value="UniProtKB-KW"/>
</dbReference>
<dbReference type="GO" id="GO:0006412">
    <property type="term" value="P:translation"/>
    <property type="evidence" value="ECO:0007669"/>
    <property type="project" value="UniProtKB-UniRule"/>
</dbReference>
<dbReference type="CDD" id="cd01433">
    <property type="entry name" value="Ribosomal_L16_L10e"/>
    <property type="match status" value="1"/>
</dbReference>
<dbReference type="FunFam" id="3.90.1170.10:FF:000001">
    <property type="entry name" value="50S ribosomal protein L16"/>
    <property type="match status" value="1"/>
</dbReference>
<dbReference type="Gene3D" id="3.90.1170.10">
    <property type="entry name" value="Ribosomal protein L10e/L16"/>
    <property type="match status" value="1"/>
</dbReference>
<dbReference type="HAMAP" id="MF_01342">
    <property type="entry name" value="Ribosomal_uL16"/>
    <property type="match status" value="1"/>
</dbReference>
<dbReference type="InterPro" id="IPR047873">
    <property type="entry name" value="Ribosomal_uL16"/>
</dbReference>
<dbReference type="InterPro" id="IPR000114">
    <property type="entry name" value="Ribosomal_uL16_bact-type"/>
</dbReference>
<dbReference type="InterPro" id="IPR020798">
    <property type="entry name" value="Ribosomal_uL16_CS"/>
</dbReference>
<dbReference type="InterPro" id="IPR016180">
    <property type="entry name" value="Ribosomal_uL16_dom"/>
</dbReference>
<dbReference type="InterPro" id="IPR036920">
    <property type="entry name" value="Ribosomal_uL16_sf"/>
</dbReference>
<dbReference type="NCBIfam" id="TIGR01164">
    <property type="entry name" value="rplP_bact"/>
    <property type="match status" value="1"/>
</dbReference>
<dbReference type="PANTHER" id="PTHR12220">
    <property type="entry name" value="50S/60S RIBOSOMAL PROTEIN L16"/>
    <property type="match status" value="1"/>
</dbReference>
<dbReference type="PANTHER" id="PTHR12220:SF13">
    <property type="entry name" value="LARGE RIBOSOMAL SUBUNIT PROTEIN UL16M"/>
    <property type="match status" value="1"/>
</dbReference>
<dbReference type="Pfam" id="PF00252">
    <property type="entry name" value="Ribosomal_L16"/>
    <property type="match status" value="1"/>
</dbReference>
<dbReference type="PRINTS" id="PR00060">
    <property type="entry name" value="RIBOSOMALL16"/>
</dbReference>
<dbReference type="SUPFAM" id="SSF54686">
    <property type="entry name" value="Ribosomal protein L16p/L10e"/>
    <property type="match status" value="1"/>
</dbReference>
<dbReference type="PROSITE" id="PS00586">
    <property type="entry name" value="RIBOSOMAL_L16_1"/>
    <property type="match status" value="1"/>
</dbReference>
<dbReference type="PROSITE" id="PS00701">
    <property type="entry name" value="RIBOSOMAL_L16_2"/>
    <property type="match status" value="1"/>
</dbReference>
<reference key="1">
    <citation type="journal article" date="2006" name="Proc. Natl. Acad. Sci. U.S.A.">
        <title>Comparative genomics of the lactic acid bacteria.</title>
        <authorList>
            <person name="Makarova K.S."/>
            <person name="Slesarev A."/>
            <person name="Wolf Y.I."/>
            <person name="Sorokin A."/>
            <person name="Mirkin B."/>
            <person name="Koonin E.V."/>
            <person name="Pavlov A."/>
            <person name="Pavlova N."/>
            <person name="Karamychev V."/>
            <person name="Polouchine N."/>
            <person name="Shakhova V."/>
            <person name="Grigoriev I."/>
            <person name="Lou Y."/>
            <person name="Rohksar D."/>
            <person name="Lucas S."/>
            <person name="Huang K."/>
            <person name="Goodstein D.M."/>
            <person name="Hawkins T."/>
            <person name="Plengvidhya V."/>
            <person name="Welker D."/>
            <person name="Hughes J."/>
            <person name="Goh Y."/>
            <person name="Benson A."/>
            <person name="Baldwin K."/>
            <person name="Lee J.-H."/>
            <person name="Diaz-Muniz I."/>
            <person name="Dosti B."/>
            <person name="Smeianov V."/>
            <person name="Wechter W."/>
            <person name="Barabote R."/>
            <person name="Lorca G."/>
            <person name="Altermann E."/>
            <person name="Barrangou R."/>
            <person name="Ganesan B."/>
            <person name="Xie Y."/>
            <person name="Rawsthorne H."/>
            <person name="Tamir D."/>
            <person name="Parker C."/>
            <person name="Breidt F."/>
            <person name="Broadbent J.R."/>
            <person name="Hutkins R."/>
            <person name="O'Sullivan D."/>
            <person name="Steele J."/>
            <person name="Unlu G."/>
            <person name="Saier M.H. Jr."/>
            <person name="Klaenhammer T."/>
            <person name="Richardson P."/>
            <person name="Kozyavkin S."/>
            <person name="Weimer B.C."/>
            <person name="Mills D.A."/>
        </authorList>
    </citation>
    <scope>NUCLEOTIDE SEQUENCE [LARGE SCALE GENOMIC DNA]</scope>
    <source>
        <strain>ATCC 367 / BCRC 12310 / CIP 105137 / JCM 1170 / LMG 11437 / NCIMB 947 / NCTC 947</strain>
    </source>
</reference>
<feature type="chain" id="PRO_1000054638" description="Large ribosomal subunit protein uL16">
    <location>
        <begin position="1"/>
        <end position="144"/>
    </location>
</feature>
<accession>Q03PW4</accession>
<comment type="function">
    <text evidence="1">Binds 23S rRNA and is also seen to make contacts with the A and possibly P site tRNAs.</text>
</comment>
<comment type="subunit">
    <text evidence="1">Part of the 50S ribosomal subunit.</text>
</comment>
<comment type="similarity">
    <text evidence="1">Belongs to the universal ribosomal protein uL16 family.</text>
</comment>
<gene>
    <name evidence="1" type="primary">rplP</name>
    <name type="ordered locus">LVIS_1683</name>
</gene>
<keyword id="KW-1185">Reference proteome</keyword>
<keyword id="KW-0687">Ribonucleoprotein</keyword>
<keyword id="KW-0689">Ribosomal protein</keyword>
<keyword id="KW-0694">RNA-binding</keyword>
<keyword id="KW-0699">rRNA-binding</keyword>
<keyword id="KW-0820">tRNA-binding</keyword>
<organism>
    <name type="scientific">Levilactobacillus brevis (strain ATCC 367 / BCRC 12310 / CIP 105137 / JCM 1170 / LMG 11437 / NCIMB 947 / NCTC 947)</name>
    <name type="common">Lactobacillus brevis</name>
    <dbReference type="NCBI Taxonomy" id="387344"/>
    <lineage>
        <taxon>Bacteria</taxon>
        <taxon>Bacillati</taxon>
        <taxon>Bacillota</taxon>
        <taxon>Bacilli</taxon>
        <taxon>Lactobacillales</taxon>
        <taxon>Lactobacillaceae</taxon>
        <taxon>Levilactobacillus</taxon>
    </lineage>
</organism>
<evidence type="ECO:0000255" key="1">
    <source>
        <dbReference type="HAMAP-Rule" id="MF_01342"/>
    </source>
</evidence>
<evidence type="ECO:0000305" key="2"/>
<name>RL16_LEVBA</name>
<protein>
    <recommendedName>
        <fullName evidence="1">Large ribosomal subunit protein uL16</fullName>
    </recommendedName>
    <alternativeName>
        <fullName evidence="2">50S ribosomal protein L16</fullName>
    </alternativeName>
</protein>
<proteinExistence type="inferred from homology"/>
<sequence length="144" mass="15931">MLVPKRVKFRRVHRGKLRGEAKGGKSVAFGDYGLQALDSHWISNRQIEAARVAITRYMKRGGKVWIKIFPHKSYTAKGVGVRMGNGKGTPDGWVAPVKRGKVMFEVGGVSEEVAREALRLAAMKLPVRTKVLSREEVGGESNED</sequence>